<sequence>MVHPYLFLNFFRELLHPLGFSEAGADAVVYTWLIMIGLVVLSIAATKRLQAVPSGLQNFMEVIVGGIENMLVETMGEHGKPFFPLVATLALFILVSNLIGLIPGFFPPTANINTTAACAVVVFVTTHIVGVKHHGAGYIKHFLGPIAWLAPMMFFIEVIGHLSRVISLTLRLFGNMNGHELVLIIFFGLAPFVVPLPMMLMGVLVSFIQAFVFMLLAMIYIQGSLEHAH</sequence>
<reference key="1">
    <citation type="submission" date="2009-07" db="EMBL/GenBank/DDBJ databases">
        <title>Complete sequence of Geobacter sp. M21.</title>
        <authorList>
            <consortium name="US DOE Joint Genome Institute"/>
            <person name="Lucas S."/>
            <person name="Copeland A."/>
            <person name="Lapidus A."/>
            <person name="Glavina del Rio T."/>
            <person name="Dalin E."/>
            <person name="Tice H."/>
            <person name="Bruce D."/>
            <person name="Goodwin L."/>
            <person name="Pitluck S."/>
            <person name="Saunders E."/>
            <person name="Brettin T."/>
            <person name="Detter J.C."/>
            <person name="Han C."/>
            <person name="Larimer F."/>
            <person name="Land M."/>
            <person name="Hauser L."/>
            <person name="Kyrpides N."/>
            <person name="Ovchinnikova G."/>
            <person name="Lovley D."/>
        </authorList>
    </citation>
    <scope>NUCLEOTIDE SEQUENCE [LARGE SCALE GENOMIC DNA]</scope>
    <source>
        <strain>M21</strain>
    </source>
</reference>
<organism>
    <name type="scientific">Geobacter sp. (strain M21)</name>
    <dbReference type="NCBI Taxonomy" id="443144"/>
    <lineage>
        <taxon>Bacteria</taxon>
        <taxon>Pseudomonadati</taxon>
        <taxon>Thermodesulfobacteriota</taxon>
        <taxon>Desulfuromonadia</taxon>
        <taxon>Geobacterales</taxon>
        <taxon>Geobacteraceae</taxon>
        <taxon>Geobacter</taxon>
    </lineage>
</organism>
<feature type="chain" id="PRO_1000215146" description="ATP synthase subunit a">
    <location>
        <begin position="1"/>
        <end position="229"/>
    </location>
</feature>
<feature type="transmembrane region" description="Helical" evidence="1">
    <location>
        <begin position="25"/>
        <end position="45"/>
    </location>
</feature>
<feature type="transmembrane region" description="Helical" evidence="1">
    <location>
        <begin position="82"/>
        <end position="102"/>
    </location>
</feature>
<feature type="transmembrane region" description="Helical" evidence="1">
    <location>
        <begin position="104"/>
        <end position="124"/>
    </location>
</feature>
<feature type="transmembrane region" description="Helical" evidence="1">
    <location>
        <begin position="142"/>
        <end position="162"/>
    </location>
</feature>
<feature type="transmembrane region" description="Helical" evidence="1">
    <location>
        <begin position="181"/>
        <end position="201"/>
    </location>
</feature>
<feature type="transmembrane region" description="Helical" evidence="1">
    <location>
        <begin position="202"/>
        <end position="222"/>
    </location>
</feature>
<comment type="function">
    <text evidence="1">Key component of the proton channel; it plays a direct role in the translocation of protons across the membrane.</text>
</comment>
<comment type="subunit">
    <text evidence="1">F-type ATPases have 2 components, CF(1) - the catalytic core - and CF(0) - the membrane proton channel. CF(1) has five subunits: alpha(3), beta(3), gamma(1), delta(1), epsilon(1). CF(0) has three main subunits: a(1), b(2) and c(9-12). The alpha and beta chains form an alternating ring which encloses part of the gamma chain. CF(1) is attached to CF(0) by a central stalk formed by the gamma and epsilon chains, while a peripheral stalk is formed by the delta and b chains.</text>
</comment>
<comment type="subcellular location">
    <subcellularLocation>
        <location evidence="1">Cell inner membrane</location>
        <topology evidence="1">Multi-pass membrane protein</topology>
    </subcellularLocation>
</comment>
<comment type="similarity">
    <text evidence="1">Belongs to the ATPase A chain family.</text>
</comment>
<accession>C6E8P0</accession>
<dbReference type="EMBL" id="CP001661">
    <property type="protein sequence ID" value="ACT20031.1"/>
    <property type="molecule type" value="Genomic_DNA"/>
</dbReference>
<dbReference type="SMR" id="C6E8P0"/>
<dbReference type="STRING" id="443144.GM21_4015"/>
<dbReference type="KEGG" id="gem:GM21_4015"/>
<dbReference type="eggNOG" id="COG0356">
    <property type="taxonomic scope" value="Bacteria"/>
</dbReference>
<dbReference type="HOGENOM" id="CLU_041018_2_2_7"/>
<dbReference type="OrthoDB" id="9789241at2"/>
<dbReference type="GO" id="GO:0005886">
    <property type="term" value="C:plasma membrane"/>
    <property type="evidence" value="ECO:0007669"/>
    <property type="project" value="UniProtKB-SubCell"/>
</dbReference>
<dbReference type="GO" id="GO:0045259">
    <property type="term" value="C:proton-transporting ATP synthase complex"/>
    <property type="evidence" value="ECO:0007669"/>
    <property type="project" value="UniProtKB-KW"/>
</dbReference>
<dbReference type="GO" id="GO:0046933">
    <property type="term" value="F:proton-transporting ATP synthase activity, rotational mechanism"/>
    <property type="evidence" value="ECO:0007669"/>
    <property type="project" value="UniProtKB-UniRule"/>
</dbReference>
<dbReference type="GO" id="GO:0042777">
    <property type="term" value="P:proton motive force-driven plasma membrane ATP synthesis"/>
    <property type="evidence" value="ECO:0007669"/>
    <property type="project" value="TreeGrafter"/>
</dbReference>
<dbReference type="CDD" id="cd00310">
    <property type="entry name" value="ATP-synt_Fo_a_6"/>
    <property type="match status" value="1"/>
</dbReference>
<dbReference type="FunFam" id="1.20.120.220:FF:000006">
    <property type="entry name" value="ATP synthase subunit a"/>
    <property type="match status" value="1"/>
</dbReference>
<dbReference type="Gene3D" id="1.20.120.220">
    <property type="entry name" value="ATP synthase, F0 complex, subunit A"/>
    <property type="match status" value="1"/>
</dbReference>
<dbReference type="HAMAP" id="MF_01393">
    <property type="entry name" value="ATP_synth_a_bact"/>
    <property type="match status" value="1"/>
</dbReference>
<dbReference type="InterPro" id="IPR045082">
    <property type="entry name" value="ATP_syn_F0_a_bact/chloroplast"/>
</dbReference>
<dbReference type="InterPro" id="IPR000568">
    <property type="entry name" value="ATP_synth_F0_asu"/>
</dbReference>
<dbReference type="InterPro" id="IPR023011">
    <property type="entry name" value="ATP_synth_F0_asu_AS"/>
</dbReference>
<dbReference type="InterPro" id="IPR035908">
    <property type="entry name" value="F0_ATP_A_sf"/>
</dbReference>
<dbReference type="NCBIfam" id="TIGR01131">
    <property type="entry name" value="ATP_synt_6_or_A"/>
    <property type="match status" value="1"/>
</dbReference>
<dbReference type="PANTHER" id="PTHR42823">
    <property type="entry name" value="ATP SYNTHASE SUBUNIT A, CHLOROPLASTIC"/>
    <property type="match status" value="1"/>
</dbReference>
<dbReference type="PANTHER" id="PTHR42823:SF3">
    <property type="entry name" value="ATP SYNTHASE SUBUNIT A, CHLOROPLASTIC"/>
    <property type="match status" value="1"/>
</dbReference>
<dbReference type="Pfam" id="PF00119">
    <property type="entry name" value="ATP-synt_A"/>
    <property type="match status" value="1"/>
</dbReference>
<dbReference type="PRINTS" id="PR00123">
    <property type="entry name" value="ATPASEA"/>
</dbReference>
<dbReference type="SUPFAM" id="SSF81336">
    <property type="entry name" value="F1F0 ATP synthase subunit A"/>
    <property type="match status" value="1"/>
</dbReference>
<dbReference type="PROSITE" id="PS00449">
    <property type="entry name" value="ATPASE_A"/>
    <property type="match status" value="1"/>
</dbReference>
<protein>
    <recommendedName>
        <fullName evidence="1">ATP synthase subunit a</fullName>
    </recommendedName>
    <alternativeName>
        <fullName evidence="1">ATP synthase F0 sector subunit a</fullName>
    </alternativeName>
    <alternativeName>
        <fullName evidence="1">F-ATPase subunit 6</fullName>
    </alternativeName>
</protein>
<keyword id="KW-0066">ATP synthesis</keyword>
<keyword id="KW-0997">Cell inner membrane</keyword>
<keyword id="KW-1003">Cell membrane</keyword>
<keyword id="KW-0138">CF(0)</keyword>
<keyword id="KW-0375">Hydrogen ion transport</keyword>
<keyword id="KW-0406">Ion transport</keyword>
<keyword id="KW-0472">Membrane</keyword>
<keyword id="KW-0812">Transmembrane</keyword>
<keyword id="KW-1133">Transmembrane helix</keyword>
<keyword id="KW-0813">Transport</keyword>
<proteinExistence type="inferred from homology"/>
<evidence type="ECO:0000255" key="1">
    <source>
        <dbReference type="HAMAP-Rule" id="MF_01393"/>
    </source>
</evidence>
<gene>
    <name evidence="1" type="primary">atpB</name>
    <name type="ordered locus">GM21_4015</name>
</gene>
<name>ATP6_GEOSM</name>